<name>ACTL8_HUMAN</name>
<protein>
    <recommendedName>
        <fullName>Actin-like protein 8</fullName>
    </recommendedName>
    <alternativeName>
        <fullName>Cancer/testis antigen 57</fullName>
        <shortName>CT57</shortName>
    </alternativeName>
</protein>
<comment type="interaction">
    <interactant intactId="EBI-10306917">
        <id>Q9H568</id>
    </interactant>
    <interactant intactId="EBI-739994">
        <id>Q9Y5P4</id>
        <label>CERT1</label>
    </interactant>
    <organismsDiffer>false</organismsDiffer>
    <experiments>3</experiments>
</comment>
<comment type="interaction">
    <interactant intactId="EBI-10306917">
        <id>Q9H568</id>
    </interactant>
    <interactant intactId="EBI-11156432">
        <id>Q9Y5P4-2</id>
        <label>CERT1</label>
    </interactant>
    <organismsDiffer>false</organismsDiffer>
    <experiments>3</experiments>
</comment>
<comment type="subcellular location">
    <subcellularLocation>
        <location evidence="1">Cytoplasm</location>
        <location evidence="1">Cytoskeleton</location>
    </subcellularLocation>
</comment>
<comment type="tissue specificity">
    <text evidence="4">Strongly expressed in testis and pancreas. Weak expression in placenta.</text>
</comment>
<comment type="similarity">
    <text evidence="5">Belongs to the actin family.</text>
</comment>
<comment type="sequence caution" evidence="5">
    <conflict type="frameshift">
        <sequence resource="EMBL-CDS" id="AAA62476"/>
    </conflict>
</comment>
<accession>Q9H568</accession>
<accession>Q13104</accession>
<accession>Q96M75</accession>
<gene>
    <name type="primary">ACTL8</name>
</gene>
<proteinExistence type="evidence at protein level"/>
<feature type="chain" id="PRO_0000286171" description="Actin-like protein 8">
    <location>
        <begin position="1"/>
        <end position="366"/>
    </location>
</feature>
<feature type="sequence variant" id="VAR_032079" description="In dbSNP:rs694214." evidence="2 3">
    <original>A</original>
    <variation>S</variation>
    <location>
        <position position="3"/>
    </location>
</feature>
<feature type="sequence variant" id="VAR_032080" description="In dbSNP:rs3795322.">
    <original>R</original>
    <variation>C</variation>
    <location>
        <position position="245"/>
    </location>
</feature>
<keyword id="KW-0963">Cytoplasm</keyword>
<keyword id="KW-0206">Cytoskeleton</keyword>
<keyword id="KW-1267">Proteomics identification</keyword>
<keyword id="KW-1185">Reference proteome</keyword>
<evidence type="ECO:0000250" key="1"/>
<evidence type="ECO:0000269" key="2">
    <source>
    </source>
</evidence>
<evidence type="ECO:0000269" key="3">
    <source>
    </source>
</evidence>
<evidence type="ECO:0000269" key="4">
    <source>
    </source>
</evidence>
<evidence type="ECO:0000305" key="5"/>
<dbReference type="EMBL" id="U20582">
    <property type="protein sequence ID" value="AAA62476.1"/>
    <property type="status" value="ALT_FRAME"/>
    <property type="molecule type" value="mRNA"/>
</dbReference>
<dbReference type="EMBL" id="AK057339">
    <property type="protein sequence ID" value="BAB71434.1"/>
    <property type="molecule type" value="mRNA"/>
</dbReference>
<dbReference type="EMBL" id="AL136529">
    <property type="status" value="NOT_ANNOTATED_CDS"/>
    <property type="molecule type" value="Genomic_DNA"/>
</dbReference>
<dbReference type="EMBL" id="BC028909">
    <property type="protein sequence ID" value="AAH28909.1"/>
    <property type="molecule type" value="mRNA"/>
</dbReference>
<dbReference type="CCDS" id="CCDS183.1"/>
<dbReference type="RefSeq" id="NP_110439.2">
    <property type="nucleotide sequence ID" value="NM_030812.3"/>
</dbReference>
<dbReference type="RefSeq" id="XP_011540514.1">
    <property type="nucleotide sequence ID" value="XM_011542212.3"/>
</dbReference>
<dbReference type="RefSeq" id="XP_054194873.1">
    <property type="nucleotide sequence ID" value="XM_054338898.1"/>
</dbReference>
<dbReference type="SMR" id="Q9H568"/>
<dbReference type="BioGRID" id="123530">
    <property type="interactions" value="28"/>
</dbReference>
<dbReference type="FunCoup" id="Q9H568">
    <property type="interactions" value="450"/>
</dbReference>
<dbReference type="IntAct" id="Q9H568">
    <property type="interactions" value="23"/>
</dbReference>
<dbReference type="STRING" id="9606.ENSP00000364555"/>
<dbReference type="iPTMnet" id="Q9H568"/>
<dbReference type="PhosphoSitePlus" id="Q9H568"/>
<dbReference type="BioMuta" id="ACTL8"/>
<dbReference type="DMDM" id="74752665"/>
<dbReference type="jPOST" id="Q9H568"/>
<dbReference type="MassIVE" id="Q9H568"/>
<dbReference type="PaxDb" id="9606-ENSP00000364555"/>
<dbReference type="PeptideAtlas" id="Q9H568"/>
<dbReference type="ProteomicsDB" id="80894"/>
<dbReference type="Pumba" id="Q9H568"/>
<dbReference type="Antibodypedia" id="14710">
    <property type="antibodies" value="149 antibodies from 25 providers"/>
</dbReference>
<dbReference type="DNASU" id="81569"/>
<dbReference type="Ensembl" id="ENST00000375406.2">
    <property type="protein sequence ID" value="ENSP00000364555.1"/>
    <property type="gene ID" value="ENSG00000117148.8"/>
</dbReference>
<dbReference type="Ensembl" id="ENST00000617065.1">
    <property type="protein sequence ID" value="ENSP00000481590.1"/>
    <property type="gene ID" value="ENSG00000117148.8"/>
</dbReference>
<dbReference type="GeneID" id="81569"/>
<dbReference type="KEGG" id="hsa:81569"/>
<dbReference type="MANE-Select" id="ENST00000375406.2">
    <property type="protein sequence ID" value="ENSP00000364555.1"/>
    <property type="RefSeq nucleotide sequence ID" value="NM_030812.3"/>
    <property type="RefSeq protein sequence ID" value="NP_110439.2"/>
</dbReference>
<dbReference type="UCSC" id="uc001bat.3">
    <property type="organism name" value="human"/>
</dbReference>
<dbReference type="AGR" id="HGNC:24018"/>
<dbReference type="CTD" id="81569"/>
<dbReference type="DisGeNET" id="81569"/>
<dbReference type="GeneCards" id="ACTL8"/>
<dbReference type="HGNC" id="HGNC:24018">
    <property type="gene designation" value="ACTL8"/>
</dbReference>
<dbReference type="HPA" id="ENSG00000117148">
    <property type="expression patterns" value="Tissue enriched (testis)"/>
</dbReference>
<dbReference type="neXtProt" id="NX_Q9H568"/>
<dbReference type="OpenTargets" id="ENSG00000117148"/>
<dbReference type="PharmGKB" id="PA142672644"/>
<dbReference type="VEuPathDB" id="HostDB:ENSG00000117148"/>
<dbReference type="eggNOG" id="KOG0676">
    <property type="taxonomic scope" value="Eukaryota"/>
</dbReference>
<dbReference type="GeneTree" id="ENSGT00940000162905"/>
<dbReference type="HOGENOM" id="CLU_027965_0_2_1"/>
<dbReference type="InParanoid" id="Q9H568"/>
<dbReference type="OMA" id="GRVLNWE"/>
<dbReference type="OrthoDB" id="9519058at2759"/>
<dbReference type="PAN-GO" id="Q9H568">
    <property type="GO annotations" value="1 GO annotation based on evolutionary models"/>
</dbReference>
<dbReference type="PhylomeDB" id="Q9H568"/>
<dbReference type="TreeFam" id="TF340354"/>
<dbReference type="PathwayCommons" id="Q9H568"/>
<dbReference type="SignaLink" id="Q9H568"/>
<dbReference type="BioGRID-ORCS" id="81569">
    <property type="hits" value="12 hits in 1150 CRISPR screens"/>
</dbReference>
<dbReference type="ChiTaRS" id="ACTL8">
    <property type="organism name" value="human"/>
</dbReference>
<dbReference type="GeneWiki" id="ACTL8"/>
<dbReference type="GenomeRNAi" id="81569"/>
<dbReference type="Pharos" id="Q9H568">
    <property type="development level" value="Tbio"/>
</dbReference>
<dbReference type="PRO" id="PR:Q9H568"/>
<dbReference type="Proteomes" id="UP000005640">
    <property type="component" value="Chromosome 1"/>
</dbReference>
<dbReference type="RNAct" id="Q9H568">
    <property type="molecule type" value="protein"/>
</dbReference>
<dbReference type="Bgee" id="ENSG00000117148">
    <property type="expression patterns" value="Expressed in oocyte and 21 other cell types or tissues"/>
</dbReference>
<dbReference type="GO" id="GO:0015629">
    <property type="term" value="C:actin cytoskeleton"/>
    <property type="evidence" value="ECO:0000318"/>
    <property type="project" value="GO_Central"/>
</dbReference>
<dbReference type="GO" id="GO:0005884">
    <property type="term" value="C:actin filament"/>
    <property type="evidence" value="ECO:0000318"/>
    <property type="project" value="GO_Central"/>
</dbReference>
<dbReference type="GO" id="GO:0030424">
    <property type="term" value="C:axon"/>
    <property type="evidence" value="ECO:0000318"/>
    <property type="project" value="GO_Central"/>
</dbReference>
<dbReference type="GO" id="GO:0005737">
    <property type="term" value="C:cytoplasm"/>
    <property type="evidence" value="ECO:0000318"/>
    <property type="project" value="GO_Central"/>
</dbReference>
<dbReference type="GO" id="GO:0016020">
    <property type="term" value="C:membrane"/>
    <property type="evidence" value="ECO:0000318"/>
    <property type="project" value="GO_Central"/>
</dbReference>
<dbReference type="GO" id="GO:0035267">
    <property type="term" value="C:NuA4 histone acetyltransferase complex"/>
    <property type="evidence" value="ECO:0000318"/>
    <property type="project" value="GO_Central"/>
</dbReference>
<dbReference type="GO" id="GO:0045202">
    <property type="term" value="C:synapse"/>
    <property type="evidence" value="ECO:0000318"/>
    <property type="project" value="GO_Central"/>
</dbReference>
<dbReference type="GO" id="GO:0019901">
    <property type="term" value="F:protein kinase binding"/>
    <property type="evidence" value="ECO:0000318"/>
    <property type="project" value="GO_Central"/>
</dbReference>
<dbReference type="GO" id="GO:0098973">
    <property type="term" value="F:structural constituent of postsynaptic actin cytoskeleton"/>
    <property type="evidence" value="ECO:0000318"/>
    <property type="project" value="GO_Central"/>
</dbReference>
<dbReference type="GO" id="GO:0007409">
    <property type="term" value="P:axonogenesis"/>
    <property type="evidence" value="ECO:0000318"/>
    <property type="project" value="GO_Central"/>
</dbReference>
<dbReference type="GO" id="GO:0048870">
    <property type="term" value="P:cell motility"/>
    <property type="evidence" value="ECO:0000318"/>
    <property type="project" value="GO_Central"/>
</dbReference>
<dbReference type="GO" id="GO:0030855">
    <property type="term" value="P:epithelial cell differentiation"/>
    <property type="evidence" value="ECO:0000270"/>
    <property type="project" value="UniProtKB"/>
</dbReference>
<dbReference type="FunFam" id="3.30.420.40:FF:000166">
    <property type="entry name" value="Actin like 8"/>
    <property type="match status" value="1"/>
</dbReference>
<dbReference type="FunFam" id="3.90.640.10:FF:000027">
    <property type="entry name" value="Actin like 8"/>
    <property type="match status" value="1"/>
</dbReference>
<dbReference type="Gene3D" id="3.30.420.40">
    <property type="match status" value="2"/>
</dbReference>
<dbReference type="Gene3D" id="3.90.640.10">
    <property type="entry name" value="Actin, Chain A, domain 4"/>
    <property type="match status" value="1"/>
</dbReference>
<dbReference type="InterPro" id="IPR004000">
    <property type="entry name" value="Actin"/>
</dbReference>
<dbReference type="InterPro" id="IPR043129">
    <property type="entry name" value="ATPase_NBD"/>
</dbReference>
<dbReference type="PANTHER" id="PTHR11937">
    <property type="entry name" value="ACTIN"/>
    <property type="match status" value="1"/>
</dbReference>
<dbReference type="Pfam" id="PF00022">
    <property type="entry name" value="Actin"/>
    <property type="match status" value="1"/>
</dbReference>
<dbReference type="PRINTS" id="PR00190">
    <property type="entry name" value="ACTIN"/>
</dbReference>
<dbReference type="SMART" id="SM00268">
    <property type="entry name" value="ACTIN"/>
    <property type="match status" value="1"/>
</dbReference>
<dbReference type="SUPFAM" id="SSF53067">
    <property type="entry name" value="Actin-like ATPase domain"/>
    <property type="match status" value="2"/>
</dbReference>
<organism>
    <name type="scientific">Homo sapiens</name>
    <name type="common">Human</name>
    <dbReference type="NCBI Taxonomy" id="9606"/>
    <lineage>
        <taxon>Eukaryota</taxon>
        <taxon>Metazoa</taxon>
        <taxon>Chordata</taxon>
        <taxon>Craniata</taxon>
        <taxon>Vertebrata</taxon>
        <taxon>Euteleostomi</taxon>
        <taxon>Mammalia</taxon>
        <taxon>Eutheria</taxon>
        <taxon>Euarchontoglires</taxon>
        <taxon>Primates</taxon>
        <taxon>Haplorrhini</taxon>
        <taxon>Catarrhini</taxon>
        <taxon>Hominidae</taxon>
        <taxon>Homo</taxon>
    </lineage>
</organism>
<reference key="1">
    <citation type="submission" date="1995-02" db="EMBL/GenBank/DDBJ databases">
        <title>Partial sequencing and chromosome mapping of cDNA clones from a Burkitt's lymphoma.</title>
        <authorList>
            <person name="Sanders R."/>
        </authorList>
    </citation>
    <scope>NUCLEOTIDE SEQUENCE [MRNA]</scope>
    <source>
        <tissue>B-cell lymphoma</tissue>
    </source>
</reference>
<reference key="2">
    <citation type="journal article" date="2004" name="Nat. Genet.">
        <title>Complete sequencing and characterization of 21,243 full-length human cDNAs.</title>
        <authorList>
            <person name="Ota T."/>
            <person name="Suzuki Y."/>
            <person name="Nishikawa T."/>
            <person name="Otsuki T."/>
            <person name="Sugiyama T."/>
            <person name="Irie R."/>
            <person name="Wakamatsu A."/>
            <person name="Hayashi K."/>
            <person name="Sato H."/>
            <person name="Nagai K."/>
            <person name="Kimura K."/>
            <person name="Makita H."/>
            <person name="Sekine M."/>
            <person name="Obayashi M."/>
            <person name="Nishi T."/>
            <person name="Shibahara T."/>
            <person name="Tanaka T."/>
            <person name="Ishii S."/>
            <person name="Yamamoto J."/>
            <person name="Saito K."/>
            <person name="Kawai Y."/>
            <person name="Isono Y."/>
            <person name="Nakamura Y."/>
            <person name="Nagahari K."/>
            <person name="Murakami K."/>
            <person name="Yasuda T."/>
            <person name="Iwayanagi T."/>
            <person name="Wagatsuma M."/>
            <person name="Shiratori A."/>
            <person name="Sudo H."/>
            <person name="Hosoiri T."/>
            <person name="Kaku Y."/>
            <person name="Kodaira H."/>
            <person name="Kondo H."/>
            <person name="Sugawara M."/>
            <person name="Takahashi M."/>
            <person name="Kanda K."/>
            <person name="Yokoi T."/>
            <person name="Furuya T."/>
            <person name="Kikkawa E."/>
            <person name="Omura Y."/>
            <person name="Abe K."/>
            <person name="Kamihara K."/>
            <person name="Katsuta N."/>
            <person name="Sato K."/>
            <person name="Tanikawa M."/>
            <person name="Yamazaki M."/>
            <person name="Ninomiya K."/>
            <person name="Ishibashi T."/>
            <person name="Yamashita H."/>
            <person name="Murakawa K."/>
            <person name="Fujimori K."/>
            <person name="Tanai H."/>
            <person name="Kimata M."/>
            <person name="Watanabe M."/>
            <person name="Hiraoka S."/>
            <person name="Chiba Y."/>
            <person name="Ishida S."/>
            <person name="Ono Y."/>
            <person name="Takiguchi S."/>
            <person name="Watanabe S."/>
            <person name="Yosida M."/>
            <person name="Hotuta T."/>
            <person name="Kusano J."/>
            <person name="Kanehori K."/>
            <person name="Takahashi-Fujii A."/>
            <person name="Hara H."/>
            <person name="Tanase T.-O."/>
            <person name="Nomura Y."/>
            <person name="Togiya S."/>
            <person name="Komai F."/>
            <person name="Hara R."/>
            <person name="Takeuchi K."/>
            <person name="Arita M."/>
            <person name="Imose N."/>
            <person name="Musashino K."/>
            <person name="Yuuki H."/>
            <person name="Oshima A."/>
            <person name="Sasaki N."/>
            <person name="Aotsuka S."/>
            <person name="Yoshikawa Y."/>
            <person name="Matsunawa H."/>
            <person name="Ichihara T."/>
            <person name="Shiohata N."/>
            <person name="Sano S."/>
            <person name="Moriya S."/>
            <person name="Momiyama H."/>
            <person name="Satoh N."/>
            <person name="Takami S."/>
            <person name="Terashima Y."/>
            <person name="Suzuki O."/>
            <person name="Nakagawa S."/>
            <person name="Senoh A."/>
            <person name="Mizoguchi H."/>
            <person name="Goto Y."/>
            <person name="Shimizu F."/>
            <person name="Wakebe H."/>
            <person name="Hishigaki H."/>
            <person name="Watanabe T."/>
            <person name="Sugiyama A."/>
            <person name="Takemoto M."/>
            <person name="Kawakami B."/>
            <person name="Yamazaki M."/>
            <person name="Watanabe K."/>
            <person name="Kumagai A."/>
            <person name="Itakura S."/>
            <person name="Fukuzumi Y."/>
            <person name="Fujimori Y."/>
            <person name="Komiyama M."/>
            <person name="Tashiro H."/>
            <person name="Tanigami A."/>
            <person name="Fujiwara T."/>
            <person name="Ono T."/>
            <person name="Yamada K."/>
            <person name="Fujii Y."/>
            <person name="Ozaki K."/>
            <person name="Hirao M."/>
            <person name="Ohmori Y."/>
            <person name="Kawabata A."/>
            <person name="Hikiji T."/>
            <person name="Kobatake N."/>
            <person name="Inagaki H."/>
            <person name="Ikema Y."/>
            <person name="Okamoto S."/>
            <person name="Okitani R."/>
            <person name="Kawakami T."/>
            <person name="Noguchi S."/>
            <person name="Itoh T."/>
            <person name="Shigeta K."/>
            <person name="Senba T."/>
            <person name="Matsumura K."/>
            <person name="Nakajima Y."/>
            <person name="Mizuno T."/>
            <person name="Morinaga M."/>
            <person name="Sasaki M."/>
            <person name="Togashi T."/>
            <person name="Oyama M."/>
            <person name="Hata H."/>
            <person name="Watanabe M."/>
            <person name="Komatsu T."/>
            <person name="Mizushima-Sugano J."/>
            <person name="Satoh T."/>
            <person name="Shirai Y."/>
            <person name="Takahashi Y."/>
            <person name="Nakagawa K."/>
            <person name="Okumura K."/>
            <person name="Nagase T."/>
            <person name="Nomura N."/>
            <person name="Kikuchi H."/>
            <person name="Masuho Y."/>
            <person name="Yamashita R."/>
            <person name="Nakai K."/>
            <person name="Yada T."/>
            <person name="Nakamura Y."/>
            <person name="Ohara O."/>
            <person name="Isogai T."/>
            <person name="Sugano S."/>
        </authorList>
    </citation>
    <scope>NUCLEOTIDE SEQUENCE [LARGE SCALE MRNA]</scope>
    <scope>VARIANT SER-3</scope>
    <source>
        <tissue>Testis</tissue>
    </source>
</reference>
<reference key="3">
    <citation type="journal article" date="2006" name="Nature">
        <title>The DNA sequence and biological annotation of human chromosome 1.</title>
        <authorList>
            <person name="Gregory S.G."/>
            <person name="Barlow K.F."/>
            <person name="McLay K.E."/>
            <person name="Kaul R."/>
            <person name="Swarbreck D."/>
            <person name="Dunham A."/>
            <person name="Scott C.E."/>
            <person name="Howe K.L."/>
            <person name="Woodfine K."/>
            <person name="Spencer C.C.A."/>
            <person name="Jones M.C."/>
            <person name="Gillson C."/>
            <person name="Searle S."/>
            <person name="Zhou Y."/>
            <person name="Kokocinski F."/>
            <person name="McDonald L."/>
            <person name="Evans R."/>
            <person name="Phillips K."/>
            <person name="Atkinson A."/>
            <person name="Cooper R."/>
            <person name="Jones C."/>
            <person name="Hall R.E."/>
            <person name="Andrews T.D."/>
            <person name="Lloyd C."/>
            <person name="Ainscough R."/>
            <person name="Almeida J.P."/>
            <person name="Ambrose K.D."/>
            <person name="Anderson F."/>
            <person name="Andrew R.W."/>
            <person name="Ashwell R.I.S."/>
            <person name="Aubin K."/>
            <person name="Babbage A.K."/>
            <person name="Bagguley C.L."/>
            <person name="Bailey J."/>
            <person name="Beasley H."/>
            <person name="Bethel G."/>
            <person name="Bird C.P."/>
            <person name="Bray-Allen S."/>
            <person name="Brown J.Y."/>
            <person name="Brown A.J."/>
            <person name="Buckley D."/>
            <person name="Burton J."/>
            <person name="Bye J."/>
            <person name="Carder C."/>
            <person name="Chapman J.C."/>
            <person name="Clark S.Y."/>
            <person name="Clarke G."/>
            <person name="Clee C."/>
            <person name="Cobley V."/>
            <person name="Collier R.E."/>
            <person name="Corby N."/>
            <person name="Coville G.J."/>
            <person name="Davies J."/>
            <person name="Deadman R."/>
            <person name="Dunn M."/>
            <person name="Earthrowl M."/>
            <person name="Ellington A.G."/>
            <person name="Errington H."/>
            <person name="Frankish A."/>
            <person name="Frankland J."/>
            <person name="French L."/>
            <person name="Garner P."/>
            <person name="Garnett J."/>
            <person name="Gay L."/>
            <person name="Ghori M.R.J."/>
            <person name="Gibson R."/>
            <person name="Gilby L.M."/>
            <person name="Gillett W."/>
            <person name="Glithero R.J."/>
            <person name="Grafham D.V."/>
            <person name="Griffiths C."/>
            <person name="Griffiths-Jones S."/>
            <person name="Grocock R."/>
            <person name="Hammond S."/>
            <person name="Harrison E.S.I."/>
            <person name="Hart E."/>
            <person name="Haugen E."/>
            <person name="Heath P.D."/>
            <person name="Holmes S."/>
            <person name="Holt K."/>
            <person name="Howden P.J."/>
            <person name="Hunt A.R."/>
            <person name="Hunt S.E."/>
            <person name="Hunter G."/>
            <person name="Isherwood J."/>
            <person name="James R."/>
            <person name="Johnson C."/>
            <person name="Johnson D."/>
            <person name="Joy A."/>
            <person name="Kay M."/>
            <person name="Kershaw J.K."/>
            <person name="Kibukawa M."/>
            <person name="Kimberley A.M."/>
            <person name="King A."/>
            <person name="Knights A.J."/>
            <person name="Lad H."/>
            <person name="Laird G."/>
            <person name="Lawlor S."/>
            <person name="Leongamornlert D.A."/>
            <person name="Lloyd D.M."/>
            <person name="Loveland J."/>
            <person name="Lovell J."/>
            <person name="Lush M.J."/>
            <person name="Lyne R."/>
            <person name="Martin S."/>
            <person name="Mashreghi-Mohammadi M."/>
            <person name="Matthews L."/>
            <person name="Matthews N.S.W."/>
            <person name="McLaren S."/>
            <person name="Milne S."/>
            <person name="Mistry S."/>
            <person name="Moore M.J.F."/>
            <person name="Nickerson T."/>
            <person name="O'Dell C.N."/>
            <person name="Oliver K."/>
            <person name="Palmeiri A."/>
            <person name="Palmer S.A."/>
            <person name="Parker A."/>
            <person name="Patel D."/>
            <person name="Pearce A.V."/>
            <person name="Peck A.I."/>
            <person name="Pelan S."/>
            <person name="Phelps K."/>
            <person name="Phillimore B.J."/>
            <person name="Plumb R."/>
            <person name="Rajan J."/>
            <person name="Raymond C."/>
            <person name="Rouse G."/>
            <person name="Saenphimmachak C."/>
            <person name="Sehra H.K."/>
            <person name="Sheridan E."/>
            <person name="Shownkeen R."/>
            <person name="Sims S."/>
            <person name="Skuce C.D."/>
            <person name="Smith M."/>
            <person name="Steward C."/>
            <person name="Subramanian S."/>
            <person name="Sycamore N."/>
            <person name="Tracey A."/>
            <person name="Tromans A."/>
            <person name="Van Helmond Z."/>
            <person name="Wall M."/>
            <person name="Wallis J.M."/>
            <person name="White S."/>
            <person name="Whitehead S.L."/>
            <person name="Wilkinson J.E."/>
            <person name="Willey D.L."/>
            <person name="Williams H."/>
            <person name="Wilming L."/>
            <person name="Wray P.W."/>
            <person name="Wu Z."/>
            <person name="Coulson A."/>
            <person name="Vaudin M."/>
            <person name="Sulston J.E."/>
            <person name="Durbin R.M."/>
            <person name="Hubbard T."/>
            <person name="Wooster R."/>
            <person name="Dunham I."/>
            <person name="Carter N.P."/>
            <person name="McVean G."/>
            <person name="Ross M.T."/>
            <person name="Harrow J."/>
            <person name="Olson M.V."/>
            <person name="Beck S."/>
            <person name="Rogers J."/>
            <person name="Bentley D.R."/>
        </authorList>
    </citation>
    <scope>NUCLEOTIDE SEQUENCE [LARGE SCALE GENOMIC DNA]</scope>
</reference>
<reference key="4">
    <citation type="journal article" date="2004" name="Genome Res.">
        <title>The status, quality, and expansion of the NIH full-length cDNA project: the Mammalian Gene Collection (MGC).</title>
        <authorList>
            <consortium name="The MGC Project Team"/>
        </authorList>
    </citation>
    <scope>NUCLEOTIDE SEQUENCE [LARGE SCALE MRNA]</scope>
    <scope>VARIANT SER-3</scope>
    <source>
        <tissue>Brain</tissue>
    </source>
</reference>
<reference key="5">
    <citation type="journal article" date="2005" name="Proc. Natl. Acad. Sci. U.S.A.">
        <title>Identification of cancer/testis-antigen genes by massively parallel signature sequencing.</title>
        <authorList>
            <person name="Chen Y.-T."/>
            <person name="Scanlan M.J."/>
            <person name="Venditti C.A."/>
            <person name="Chua R."/>
            <person name="Theiler G."/>
            <person name="Stevenson B.J."/>
            <person name="Iseli C."/>
            <person name="Gure A.O."/>
            <person name="Vasicek T."/>
            <person name="Strausberg R.L."/>
            <person name="Jongeneel C.V."/>
            <person name="Old L.J."/>
            <person name="Simpson A.J.G."/>
        </authorList>
    </citation>
    <scope>TISSUE SPECIFICITY</scope>
</reference>
<sequence>MAARTVIIDHGSGFLKAGTAGWNEPQMVFPNIVNYLPCKENPGPSYARRRVSLGIDICHPDTFSYPIERGRILNWEGVQYLWSFVLENHRREQEVPPVIITETPLREPADRKKMLEILFELLHVPSVLLADQLQMSLYASGLLTGVVVDSGYGLTRVQPFHQGRPLPASGKTLEFAGQDLSAYLLKSLFKEDCDRRCLFQLETVAVTQMNKCYVPQNLGEALDFRERQQSALDESNTYQLPDGSRVELTPMQRVAPEMFFSPQVFEQPGPSIPRAIVESVESCEISLRPLLVSHVMACGGNTLYPGFTKRLFRELMGDHVSSTKATVWEGSNRNFSVWLGASVVAHLSTYQSEWMSREEYGEHMRM</sequence>